<comment type="function">
    <text evidence="1">One of the primary rRNA binding proteins. Required for association of the 30S and 50S subunits to form the 70S ribosome, for tRNA binding and peptide bond formation. It has been suggested to have peptidyltransferase activity; this is somewhat controversial. Makes several contacts with the 16S rRNA in the 70S ribosome.</text>
</comment>
<comment type="subunit">
    <text evidence="1">Part of the 50S ribosomal subunit. Forms a bridge to the 30S subunit in the 70S ribosome.</text>
</comment>
<comment type="similarity">
    <text evidence="1">Belongs to the universal ribosomal protein uL2 family.</text>
</comment>
<sequence length="275" mass="30258">MAIVKVKPTSPGRRAMVKVVNKDLHKGKPHAALLDTQSSKAGRNNNGRITTRHQGGGHKQHYRVIDFRRTKDGIPAKVERLEYDPNRSANIALVLYADGERRYIIAPKGVTVGQQLMSGSEAPIRAGNTLPIRNIPVGTTIHCIEMLPGKGAQMARSAGTSAMLLAREGLYAQVRLRSGEIRRVHIECRATIGEVGNEEHSLRQIGKAGANRWRGIRPTVRGVAMNPIDHPHGGGEGRTAAGRDPVSPWGTPTKGFRTRRNKRTTTMIVQRRHKR</sequence>
<feature type="chain" id="PRO_0000237166" description="Large ribosomal subunit protein uL2">
    <location>
        <begin position="1"/>
        <end position="275"/>
    </location>
</feature>
<feature type="region of interest" description="Disordered" evidence="2">
    <location>
        <begin position="38"/>
        <end position="60"/>
    </location>
</feature>
<feature type="region of interest" description="Disordered" evidence="2">
    <location>
        <begin position="224"/>
        <end position="257"/>
    </location>
</feature>
<feature type="compositionally biased region" description="Polar residues" evidence="2">
    <location>
        <begin position="38"/>
        <end position="53"/>
    </location>
</feature>
<accession>Q3JMR6</accession>
<evidence type="ECO:0000255" key="1">
    <source>
        <dbReference type="HAMAP-Rule" id="MF_01320"/>
    </source>
</evidence>
<evidence type="ECO:0000256" key="2">
    <source>
        <dbReference type="SAM" id="MobiDB-lite"/>
    </source>
</evidence>
<evidence type="ECO:0000305" key="3"/>
<organism>
    <name type="scientific">Burkholderia pseudomallei (strain 1710b)</name>
    <dbReference type="NCBI Taxonomy" id="320372"/>
    <lineage>
        <taxon>Bacteria</taxon>
        <taxon>Pseudomonadati</taxon>
        <taxon>Pseudomonadota</taxon>
        <taxon>Betaproteobacteria</taxon>
        <taxon>Burkholderiales</taxon>
        <taxon>Burkholderiaceae</taxon>
        <taxon>Burkholderia</taxon>
        <taxon>pseudomallei group</taxon>
    </lineage>
</organism>
<protein>
    <recommendedName>
        <fullName evidence="1">Large ribosomal subunit protein uL2</fullName>
    </recommendedName>
    <alternativeName>
        <fullName evidence="3">50S ribosomal protein L2</fullName>
    </alternativeName>
</protein>
<keyword id="KW-0687">Ribonucleoprotein</keyword>
<keyword id="KW-0689">Ribosomal protein</keyword>
<keyword id="KW-0694">RNA-binding</keyword>
<keyword id="KW-0699">rRNA-binding</keyword>
<proteinExistence type="inferred from homology"/>
<reference key="1">
    <citation type="journal article" date="2010" name="Genome Biol. Evol.">
        <title>Continuing evolution of Burkholderia mallei through genome reduction and large-scale rearrangements.</title>
        <authorList>
            <person name="Losada L."/>
            <person name="Ronning C.M."/>
            <person name="DeShazer D."/>
            <person name="Woods D."/>
            <person name="Fedorova N."/>
            <person name="Kim H.S."/>
            <person name="Shabalina S.A."/>
            <person name="Pearson T.R."/>
            <person name="Brinkac L."/>
            <person name="Tan P."/>
            <person name="Nandi T."/>
            <person name="Crabtree J."/>
            <person name="Badger J."/>
            <person name="Beckstrom-Sternberg S."/>
            <person name="Saqib M."/>
            <person name="Schutzer S.E."/>
            <person name="Keim P."/>
            <person name="Nierman W.C."/>
        </authorList>
    </citation>
    <scope>NUCLEOTIDE SEQUENCE [LARGE SCALE GENOMIC DNA]</scope>
    <source>
        <strain>1710b</strain>
    </source>
</reference>
<name>RL2_BURP1</name>
<dbReference type="EMBL" id="CP000124">
    <property type="protein sequence ID" value="ABA50403.1"/>
    <property type="molecule type" value="Genomic_DNA"/>
</dbReference>
<dbReference type="RefSeq" id="WP_004199274.1">
    <property type="nucleotide sequence ID" value="NC_007434.1"/>
</dbReference>
<dbReference type="SMR" id="Q3JMR6"/>
<dbReference type="EnsemblBacteria" id="ABA50403">
    <property type="protein sequence ID" value="ABA50403"/>
    <property type="gene ID" value="BURPS1710b_3773"/>
</dbReference>
<dbReference type="GeneID" id="93061829"/>
<dbReference type="KEGG" id="bpm:BURPS1710b_3773"/>
<dbReference type="HOGENOM" id="CLU_036235_2_1_4"/>
<dbReference type="Proteomes" id="UP000002700">
    <property type="component" value="Chromosome I"/>
</dbReference>
<dbReference type="GO" id="GO:0015934">
    <property type="term" value="C:large ribosomal subunit"/>
    <property type="evidence" value="ECO:0007669"/>
    <property type="project" value="InterPro"/>
</dbReference>
<dbReference type="GO" id="GO:0019843">
    <property type="term" value="F:rRNA binding"/>
    <property type="evidence" value="ECO:0007669"/>
    <property type="project" value="UniProtKB-UniRule"/>
</dbReference>
<dbReference type="GO" id="GO:0003735">
    <property type="term" value="F:structural constituent of ribosome"/>
    <property type="evidence" value="ECO:0007669"/>
    <property type="project" value="InterPro"/>
</dbReference>
<dbReference type="GO" id="GO:0016740">
    <property type="term" value="F:transferase activity"/>
    <property type="evidence" value="ECO:0007669"/>
    <property type="project" value="InterPro"/>
</dbReference>
<dbReference type="GO" id="GO:0002181">
    <property type="term" value="P:cytoplasmic translation"/>
    <property type="evidence" value="ECO:0007669"/>
    <property type="project" value="TreeGrafter"/>
</dbReference>
<dbReference type="FunFam" id="2.30.30.30:FF:000001">
    <property type="entry name" value="50S ribosomal protein L2"/>
    <property type="match status" value="1"/>
</dbReference>
<dbReference type="FunFam" id="2.40.50.140:FF:000003">
    <property type="entry name" value="50S ribosomal protein L2"/>
    <property type="match status" value="1"/>
</dbReference>
<dbReference type="FunFam" id="4.10.950.10:FF:000001">
    <property type="entry name" value="50S ribosomal protein L2"/>
    <property type="match status" value="1"/>
</dbReference>
<dbReference type="Gene3D" id="2.30.30.30">
    <property type="match status" value="1"/>
</dbReference>
<dbReference type="Gene3D" id="2.40.50.140">
    <property type="entry name" value="Nucleic acid-binding proteins"/>
    <property type="match status" value="1"/>
</dbReference>
<dbReference type="Gene3D" id="4.10.950.10">
    <property type="entry name" value="Ribosomal protein L2, domain 3"/>
    <property type="match status" value="1"/>
</dbReference>
<dbReference type="HAMAP" id="MF_01320_B">
    <property type="entry name" value="Ribosomal_uL2_B"/>
    <property type="match status" value="1"/>
</dbReference>
<dbReference type="InterPro" id="IPR012340">
    <property type="entry name" value="NA-bd_OB-fold"/>
</dbReference>
<dbReference type="InterPro" id="IPR014722">
    <property type="entry name" value="Rib_uL2_dom2"/>
</dbReference>
<dbReference type="InterPro" id="IPR002171">
    <property type="entry name" value="Ribosomal_uL2"/>
</dbReference>
<dbReference type="InterPro" id="IPR005880">
    <property type="entry name" value="Ribosomal_uL2_bac/org-type"/>
</dbReference>
<dbReference type="InterPro" id="IPR022669">
    <property type="entry name" value="Ribosomal_uL2_C"/>
</dbReference>
<dbReference type="InterPro" id="IPR022671">
    <property type="entry name" value="Ribosomal_uL2_CS"/>
</dbReference>
<dbReference type="InterPro" id="IPR014726">
    <property type="entry name" value="Ribosomal_uL2_dom3"/>
</dbReference>
<dbReference type="InterPro" id="IPR022666">
    <property type="entry name" value="Ribosomal_uL2_RNA-bd_dom"/>
</dbReference>
<dbReference type="InterPro" id="IPR008991">
    <property type="entry name" value="Translation_prot_SH3-like_sf"/>
</dbReference>
<dbReference type="NCBIfam" id="TIGR01171">
    <property type="entry name" value="rplB_bact"/>
    <property type="match status" value="1"/>
</dbReference>
<dbReference type="PANTHER" id="PTHR13691:SF5">
    <property type="entry name" value="LARGE RIBOSOMAL SUBUNIT PROTEIN UL2M"/>
    <property type="match status" value="1"/>
</dbReference>
<dbReference type="PANTHER" id="PTHR13691">
    <property type="entry name" value="RIBOSOMAL PROTEIN L2"/>
    <property type="match status" value="1"/>
</dbReference>
<dbReference type="Pfam" id="PF00181">
    <property type="entry name" value="Ribosomal_L2"/>
    <property type="match status" value="1"/>
</dbReference>
<dbReference type="Pfam" id="PF03947">
    <property type="entry name" value="Ribosomal_L2_C"/>
    <property type="match status" value="1"/>
</dbReference>
<dbReference type="PIRSF" id="PIRSF002158">
    <property type="entry name" value="Ribosomal_L2"/>
    <property type="match status" value="1"/>
</dbReference>
<dbReference type="SMART" id="SM01383">
    <property type="entry name" value="Ribosomal_L2"/>
    <property type="match status" value="1"/>
</dbReference>
<dbReference type="SMART" id="SM01382">
    <property type="entry name" value="Ribosomal_L2_C"/>
    <property type="match status" value="1"/>
</dbReference>
<dbReference type="SUPFAM" id="SSF50249">
    <property type="entry name" value="Nucleic acid-binding proteins"/>
    <property type="match status" value="1"/>
</dbReference>
<dbReference type="SUPFAM" id="SSF50104">
    <property type="entry name" value="Translation proteins SH3-like domain"/>
    <property type="match status" value="1"/>
</dbReference>
<dbReference type="PROSITE" id="PS00467">
    <property type="entry name" value="RIBOSOMAL_L2"/>
    <property type="match status" value="1"/>
</dbReference>
<gene>
    <name evidence="1" type="primary">rplB</name>
    <name type="ordered locus">BURPS1710b_3773</name>
</gene>